<keyword id="KW-0028">Amino-acid biosynthesis</keyword>
<keyword id="KW-0055">Arginine biosynthesis</keyword>
<keyword id="KW-0067">ATP-binding</keyword>
<keyword id="KW-0963">Cytoplasm</keyword>
<keyword id="KW-0418">Kinase</keyword>
<keyword id="KW-0547">Nucleotide-binding</keyword>
<keyword id="KW-0808">Transferase</keyword>
<reference key="1">
    <citation type="journal article" date="2009" name="J. Bacteriol.">
        <title>Genome sequence of Azotobacter vinelandii, an obligate aerobe specialized to support diverse anaerobic metabolic processes.</title>
        <authorList>
            <person name="Setubal J.C."/>
            <person name="Dos Santos P."/>
            <person name="Goldman B.S."/>
            <person name="Ertesvaag H."/>
            <person name="Espin G."/>
            <person name="Rubio L.M."/>
            <person name="Valla S."/>
            <person name="Almeida N.F."/>
            <person name="Balasubramanian D."/>
            <person name="Cromes L."/>
            <person name="Curatti L."/>
            <person name="Du Z."/>
            <person name="Godsy E."/>
            <person name="Goodner B."/>
            <person name="Hellner-Burris K."/>
            <person name="Hernandez J.A."/>
            <person name="Houmiel K."/>
            <person name="Imperial J."/>
            <person name="Kennedy C."/>
            <person name="Larson T.J."/>
            <person name="Latreille P."/>
            <person name="Ligon L.S."/>
            <person name="Lu J."/>
            <person name="Maerk M."/>
            <person name="Miller N.M."/>
            <person name="Norton S."/>
            <person name="O'Carroll I.P."/>
            <person name="Paulsen I."/>
            <person name="Raulfs E.C."/>
            <person name="Roemer R."/>
            <person name="Rosser J."/>
            <person name="Segura D."/>
            <person name="Slater S."/>
            <person name="Stricklin S.L."/>
            <person name="Studholme D.J."/>
            <person name="Sun J."/>
            <person name="Viana C.J."/>
            <person name="Wallin E."/>
            <person name="Wang B."/>
            <person name="Wheeler C."/>
            <person name="Zhu H."/>
            <person name="Dean D.R."/>
            <person name="Dixon R."/>
            <person name="Wood D."/>
        </authorList>
    </citation>
    <scope>NUCLEOTIDE SEQUENCE [LARGE SCALE GENOMIC DNA]</scope>
    <source>
        <strain>DJ / ATCC BAA-1303</strain>
    </source>
</reference>
<evidence type="ECO:0000255" key="1">
    <source>
        <dbReference type="HAMAP-Rule" id="MF_00082"/>
    </source>
</evidence>
<organism>
    <name type="scientific">Azotobacter vinelandii (strain DJ / ATCC BAA-1303)</name>
    <dbReference type="NCBI Taxonomy" id="322710"/>
    <lineage>
        <taxon>Bacteria</taxon>
        <taxon>Pseudomonadati</taxon>
        <taxon>Pseudomonadota</taxon>
        <taxon>Gammaproteobacteria</taxon>
        <taxon>Pseudomonadales</taxon>
        <taxon>Pseudomonadaceae</taxon>
        <taxon>Azotobacter</taxon>
    </lineage>
</organism>
<dbReference type="EC" id="2.7.2.8" evidence="1"/>
<dbReference type="EMBL" id="CP001157">
    <property type="protein sequence ID" value="ACO76550.1"/>
    <property type="molecule type" value="Genomic_DNA"/>
</dbReference>
<dbReference type="RefSeq" id="WP_012698978.1">
    <property type="nucleotide sequence ID" value="NC_012560.1"/>
</dbReference>
<dbReference type="SMR" id="C1DI53"/>
<dbReference type="STRING" id="322710.Avin_02900"/>
<dbReference type="EnsemblBacteria" id="ACO76550">
    <property type="protein sequence ID" value="ACO76550"/>
    <property type="gene ID" value="Avin_02900"/>
</dbReference>
<dbReference type="GeneID" id="88183743"/>
<dbReference type="KEGG" id="avn:Avin_02900"/>
<dbReference type="eggNOG" id="COG0548">
    <property type="taxonomic scope" value="Bacteria"/>
</dbReference>
<dbReference type="HOGENOM" id="CLU_053680_0_0_6"/>
<dbReference type="OrthoDB" id="9803155at2"/>
<dbReference type="UniPathway" id="UPA00068">
    <property type="reaction ID" value="UER00107"/>
</dbReference>
<dbReference type="Proteomes" id="UP000002424">
    <property type="component" value="Chromosome"/>
</dbReference>
<dbReference type="GO" id="GO:0005737">
    <property type="term" value="C:cytoplasm"/>
    <property type="evidence" value="ECO:0007669"/>
    <property type="project" value="UniProtKB-SubCell"/>
</dbReference>
<dbReference type="GO" id="GO:0003991">
    <property type="term" value="F:acetylglutamate kinase activity"/>
    <property type="evidence" value="ECO:0007669"/>
    <property type="project" value="UniProtKB-UniRule"/>
</dbReference>
<dbReference type="GO" id="GO:0005524">
    <property type="term" value="F:ATP binding"/>
    <property type="evidence" value="ECO:0007669"/>
    <property type="project" value="UniProtKB-UniRule"/>
</dbReference>
<dbReference type="GO" id="GO:0042450">
    <property type="term" value="P:arginine biosynthetic process via ornithine"/>
    <property type="evidence" value="ECO:0007669"/>
    <property type="project" value="UniProtKB-UniRule"/>
</dbReference>
<dbReference type="GO" id="GO:0006526">
    <property type="term" value="P:L-arginine biosynthetic process"/>
    <property type="evidence" value="ECO:0007669"/>
    <property type="project" value="UniProtKB-UniPathway"/>
</dbReference>
<dbReference type="CDD" id="cd04250">
    <property type="entry name" value="AAK_NAGK-C"/>
    <property type="match status" value="1"/>
</dbReference>
<dbReference type="FunFam" id="3.40.1160.10:FF:000004">
    <property type="entry name" value="Acetylglutamate kinase"/>
    <property type="match status" value="1"/>
</dbReference>
<dbReference type="Gene3D" id="3.40.1160.10">
    <property type="entry name" value="Acetylglutamate kinase-like"/>
    <property type="match status" value="1"/>
</dbReference>
<dbReference type="HAMAP" id="MF_00082">
    <property type="entry name" value="ArgB"/>
    <property type="match status" value="1"/>
</dbReference>
<dbReference type="InterPro" id="IPR036393">
    <property type="entry name" value="AceGlu_kinase-like_sf"/>
</dbReference>
<dbReference type="InterPro" id="IPR004662">
    <property type="entry name" value="AcgluKinase_fam"/>
</dbReference>
<dbReference type="InterPro" id="IPR037528">
    <property type="entry name" value="ArgB"/>
</dbReference>
<dbReference type="InterPro" id="IPR001048">
    <property type="entry name" value="Asp/Glu/Uridylate_kinase"/>
</dbReference>
<dbReference type="InterPro" id="IPR001057">
    <property type="entry name" value="Glu/AcGlu_kinase"/>
</dbReference>
<dbReference type="InterPro" id="IPR041727">
    <property type="entry name" value="NAGK-C"/>
</dbReference>
<dbReference type="NCBIfam" id="TIGR00761">
    <property type="entry name" value="argB"/>
    <property type="match status" value="1"/>
</dbReference>
<dbReference type="PANTHER" id="PTHR23342">
    <property type="entry name" value="N-ACETYLGLUTAMATE SYNTHASE"/>
    <property type="match status" value="1"/>
</dbReference>
<dbReference type="PANTHER" id="PTHR23342:SF0">
    <property type="entry name" value="N-ACETYLGLUTAMATE SYNTHASE, MITOCHONDRIAL"/>
    <property type="match status" value="1"/>
</dbReference>
<dbReference type="Pfam" id="PF00696">
    <property type="entry name" value="AA_kinase"/>
    <property type="match status" value="1"/>
</dbReference>
<dbReference type="PIRSF" id="PIRSF000728">
    <property type="entry name" value="NAGK"/>
    <property type="match status" value="1"/>
</dbReference>
<dbReference type="PRINTS" id="PR00474">
    <property type="entry name" value="GLU5KINASE"/>
</dbReference>
<dbReference type="SUPFAM" id="SSF53633">
    <property type="entry name" value="Carbamate kinase-like"/>
    <property type="match status" value="1"/>
</dbReference>
<feature type="chain" id="PRO_1000202557" description="Acetylglutamate kinase">
    <location>
        <begin position="1"/>
        <end position="300"/>
    </location>
</feature>
<feature type="binding site" evidence="1">
    <location>
        <begin position="68"/>
        <end position="69"/>
    </location>
    <ligand>
        <name>substrate</name>
    </ligand>
</feature>
<feature type="binding site" evidence="1">
    <location>
        <position position="90"/>
    </location>
    <ligand>
        <name>substrate</name>
    </ligand>
</feature>
<feature type="binding site" evidence="1">
    <location>
        <position position="195"/>
    </location>
    <ligand>
        <name>substrate</name>
    </ligand>
</feature>
<feature type="site" description="Transition state stabilizer" evidence="1">
    <location>
        <position position="33"/>
    </location>
</feature>
<feature type="site" description="Transition state stabilizer" evidence="1">
    <location>
        <position position="255"/>
    </location>
</feature>
<gene>
    <name evidence="1" type="primary">argB</name>
    <name type="ordered locus">Avin_02900</name>
</gene>
<accession>C1DI53</accession>
<sequence>MTLSRDAAIQVAQVLSEALPYIRRFVGKTLVIKYGGNAMESDELKTGFARDIVLMKAVGIHPVVVHGGGPQIGDLLKRLSIESRFVDGMRVTDAQTMDVVEMVLGGQVNKDIVNLINRHGGSAIGLTGKDAGLIRAKKLKVTRQTPEMTQPEIIDIGQVGEVESVNTELLNMLVQGDFIPVIAPIGVGADGESYNINADLVAGKVAEALKAEKLMLLTNIAGLMDKEGRVLTGLSTEQVDALIADGTIYGGMLPKIRCALDAVQGGVTSAHIIDGRVPNAVLLEIFTDTGVGTLITNRQG</sequence>
<proteinExistence type="inferred from homology"/>
<comment type="function">
    <text evidence="1">Catalyzes the ATP-dependent phosphorylation of N-acetyl-L-glutamate.</text>
</comment>
<comment type="catalytic activity">
    <reaction evidence="1">
        <text>N-acetyl-L-glutamate + ATP = N-acetyl-L-glutamyl 5-phosphate + ADP</text>
        <dbReference type="Rhea" id="RHEA:14629"/>
        <dbReference type="ChEBI" id="CHEBI:30616"/>
        <dbReference type="ChEBI" id="CHEBI:44337"/>
        <dbReference type="ChEBI" id="CHEBI:57936"/>
        <dbReference type="ChEBI" id="CHEBI:456216"/>
        <dbReference type="EC" id="2.7.2.8"/>
    </reaction>
</comment>
<comment type="pathway">
    <text evidence="1">Amino-acid biosynthesis; L-arginine biosynthesis; N(2)-acetyl-L-ornithine from L-glutamate: step 2/4.</text>
</comment>
<comment type="subcellular location">
    <subcellularLocation>
        <location evidence="1">Cytoplasm</location>
    </subcellularLocation>
</comment>
<comment type="similarity">
    <text evidence="1">Belongs to the acetylglutamate kinase family. ArgB subfamily.</text>
</comment>
<protein>
    <recommendedName>
        <fullName evidence="1">Acetylglutamate kinase</fullName>
        <ecNumber evidence="1">2.7.2.8</ecNumber>
    </recommendedName>
    <alternativeName>
        <fullName evidence="1">N-acetyl-L-glutamate 5-phosphotransferase</fullName>
    </alternativeName>
    <alternativeName>
        <fullName evidence="1">NAG kinase</fullName>
        <shortName evidence="1">NAGK</shortName>
    </alternativeName>
</protein>
<name>ARGB_AZOVD</name>